<evidence type="ECO:0000250" key="1"/>
<evidence type="ECO:0000255" key="2"/>
<evidence type="ECO:0000255" key="3">
    <source>
        <dbReference type="PROSITE-ProRule" id="PRU00521"/>
    </source>
</evidence>
<evidence type="ECO:0000269" key="4">
    <source>
    </source>
</evidence>
<evidence type="ECO:0000269" key="5">
    <source>
    </source>
</evidence>
<evidence type="ECO:0000269" key="6">
    <source>
    </source>
</evidence>
<evidence type="ECO:0000269" key="7">
    <source>
    </source>
</evidence>
<evidence type="ECO:0000269" key="8">
    <source>
    </source>
</evidence>
<evidence type="ECO:0000269" key="9">
    <source>
    </source>
</evidence>
<evidence type="ECO:0000269" key="10">
    <source ref="4"/>
</evidence>
<evidence type="ECO:0000269" key="11">
    <source ref="5"/>
</evidence>
<evidence type="ECO:0000269" key="12">
    <source ref="7"/>
</evidence>
<evidence type="ECO:0007829" key="13">
    <source>
        <dbReference type="PDB" id="7WQ3"/>
    </source>
</evidence>
<evidence type="ECO:0007829" key="14">
    <source>
        <dbReference type="PDB" id="7XJJ"/>
    </source>
</evidence>
<reference key="1">
    <citation type="journal article" date="1994" name="Proc. Natl. Acad. Sci. U.S.A.">
        <title>Molecular cloning of a functional human galanin receptor.</title>
        <authorList>
            <person name="Habert-Ortoli E."/>
            <person name="Amiranoff B."/>
            <person name="Loquet I."/>
            <person name="Laburthe M."/>
            <person name="Mayaux J.-F."/>
        </authorList>
    </citation>
    <scope>NUCLEOTIDE SEQUENCE [MRNA]</scope>
    <scope>FUNCTION</scope>
    <scope>VARIANTS CYS-15 AND ASN-334</scope>
    <source>
        <tissue>Melanoma</tissue>
    </source>
</reference>
<reference key="2">
    <citation type="journal article" date="1997" name="Biochem. Biophys. Res. Commun.">
        <title>Cloning, chromosomal location, and transcriptional regulation of the human galanin-1 receptor gene (GALN1R).</title>
        <authorList>
            <person name="Lorimer D.D."/>
            <person name="Matkowskj K."/>
            <person name="Benya R.V."/>
        </authorList>
    </citation>
    <scope>NUCLEOTIDE SEQUENCE [MRNA]</scope>
    <scope>VARIANTS CYS-15 AND ASN-334</scope>
    <source>
        <tissue>Small intestine</tissue>
    </source>
</reference>
<reference key="3">
    <citation type="journal article" date="1997" name="Genomics">
        <title>Structural organization of the mouse and human GALR1 galanin receptor genes (Galnr and GALNR) and chromosomal localization of the mouse gene.</title>
        <authorList>
            <person name="Jacoby A.S."/>
            <person name="Webb G.C."/>
            <person name="Liu M.L."/>
            <person name="Kofler B."/>
            <person name="Hort Y.J."/>
            <person name="Fathi Z."/>
            <person name="Bottema C.D.K."/>
            <person name="Shine J."/>
            <person name="Iismaa T.P."/>
        </authorList>
    </citation>
    <scope>NUCLEOTIDE SEQUENCE [GENOMIC DNA]</scope>
    <scope>VARIANT ASN-334</scope>
</reference>
<reference key="4">
    <citation type="submission" date="1995-03" db="EMBL/GenBank/DDBJ databases">
        <authorList>
            <person name="Ross P.C."/>
        </authorList>
    </citation>
    <scope>NUCLEOTIDE SEQUENCE [MRNA]</scope>
    <scope>VARIANT ASN-334</scope>
    <source>
        <tissue>Brain</tissue>
    </source>
</reference>
<reference key="5">
    <citation type="submission" date="2004-02" db="EMBL/GenBank/DDBJ databases">
        <title>cDNA clones of human proteins involved in signal transduction sequenced by the Guthrie cDNA resource center (www.cdna.org).</title>
        <authorList>
            <person name="Kopatz S.A."/>
            <person name="Aronstam R.S."/>
            <person name="Sharma S.V."/>
        </authorList>
    </citation>
    <scope>NUCLEOTIDE SEQUENCE [LARGE SCALE MRNA]</scope>
    <scope>VARIANT ASN-334</scope>
    <source>
        <tissue>Brain</tissue>
    </source>
</reference>
<reference key="6">
    <citation type="journal article" date="2005" name="Nature">
        <title>DNA sequence and analysis of human chromosome 18.</title>
        <authorList>
            <person name="Nusbaum C."/>
            <person name="Zody M.C."/>
            <person name="Borowsky M.L."/>
            <person name="Kamal M."/>
            <person name="Kodira C.D."/>
            <person name="Taylor T.D."/>
            <person name="Whittaker C.A."/>
            <person name="Chang J.L."/>
            <person name="Cuomo C.A."/>
            <person name="Dewar K."/>
            <person name="FitzGerald M.G."/>
            <person name="Yang X."/>
            <person name="Abouelleil A."/>
            <person name="Allen N.R."/>
            <person name="Anderson S."/>
            <person name="Bloom T."/>
            <person name="Bugalter B."/>
            <person name="Butler J."/>
            <person name="Cook A."/>
            <person name="DeCaprio D."/>
            <person name="Engels R."/>
            <person name="Garber M."/>
            <person name="Gnirke A."/>
            <person name="Hafez N."/>
            <person name="Hall J.L."/>
            <person name="Norman C.H."/>
            <person name="Itoh T."/>
            <person name="Jaffe D.B."/>
            <person name="Kuroki Y."/>
            <person name="Lehoczky J."/>
            <person name="Lui A."/>
            <person name="Macdonald P."/>
            <person name="Mauceli E."/>
            <person name="Mikkelsen T.S."/>
            <person name="Naylor J.W."/>
            <person name="Nicol R."/>
            <person name="Nguyen C."/>
            <person name="Noguchi H."/>
            <person name="O'Leary S.B."/>
            <person name="Piqani B."/>
            <person name="Smith C.L."/>
            <person name="Talamas J.A."/>
            <person name="Topham K."/>
            <person name="Totoki Y."/>
            <person name="Toyoda A."/>
            <person name="Wain H.M."/>
            <person name="Young S.K."/>
            <person name="Zeng Q."/>
            <person name="Zimmer A.R."/>
            <person name="Fujiyama A."/>
            <person name="Hattori M."/>
            <person name="Birren B.W."/>
            <person name="Sakaki Y."/>
            <person name="Lander E.S."/>
        </authorList>
    </citation>
    <scope>NUCLEOTIDE SEQUENCE [LARGE SCALE GENOMIC DNA]</scope>
</reference>
<reference key="7">
    <citation type="submission" date="2005-07" db="EMBL/GenBank/DDBJ databases">
        <authorList>
            <person name="Mural R.J."/>
            <person name="Istrail S."/>
            <person name="Sutton G.G."/>
            <person name="Florea L."/>
            <person name="Halpern A.L."/>
            <person name="Mobarry C.M."/>
            <person name="Lippert R."/>
            <person name="Walenz B."/>
            <person name="Shatkay H."/>
            <person name="Dew I."/>
            <person name="Miller J.R."/>
            <person name="Flanigan M.J."/>
            <person name="Edwards N.J."/>
            <person name="Bolanos R."/>
            <person name="Fasulo D."/>
            <person name="Halldorsson B.V."/>
            <person name="Hannenhalli S."/>
            <person name="Turner R."/>
            <person name="Yooseph S."/>
            <person name="Lu F."/>
            <person name="Nusskern D.R."/>
            <person name="Shue B.C."/>
            <person name="Zheng X.H."/>
            <person name="Zhong F."/>
            <person name="Delcher A.L."/>
            <person name="Huson D.H."/>
            <person name="Kravitz S.A."/>
            <person name="Mouchard L."/>
            <person name="Reinert K."/>
            <person name="Remington K.A."/>
            <person name="Clark A.G."/>
            <person name="Waterman M.S."/>
            <person name="Eichler E.E."/>
            <person name="Adams M.D."/>
            <person name="Hunkapiller M.W."/>
            <person name="Myers E.W."/>
            <person name="Venter J.C."/>
        </authorList>
    </citation>
    <scope>NUCLEOTIDE SEQUENCE [LARGE SCALE GENOMIC DNA]</scope>
    <scope>VARIANT ASN-334</scope>
</reference>
<reference key="8">
    <citation type="journal article" date="2004" name="Genome Res.">
        <title>The status, quality, and expansion of the NIH full-length cDNA project: the Mammalian Gene Collection (MGC).</title>
        <authorList>
            <consortium name="The MGC Project Team"/>
        </authorList>
    </citation>
    <scope>NUCLEOTIDE SEQUENCE [LARGE SCALE MRNA]</scope>
    <scope>VARIANT ASN-334</scope>
</reference>
<reference key="9">
    <citation type="journal article" date="2015" name="Hum. Mol. Genet.">
        <title>Galanin pathogenic mutations in temporal lobe epilepsy.</title>
        <authorList>
            <person name="Guipponi M."/>
            <person name="Chentouf A."/>
            <person name="Webling K.E."/>
            <person name="Freimann K."/>
            <person name="Crespel A."/>
            <person name="Nobile C."/>
            <person name="Lemke J.R."/>
            <person name="Hansen J."/>
            <person name="Dorn T."/>
            <person name="Lesca G."/>
            <person name="Ryvlin P."/>
            <person name="Hirsch E."/>
            <person name="Rudolf G."/>
            <person name="Rosenberg D.S."/>
            <person name="Weber Y."/>
            <person name="Becker F."/>
            <person name="Helbig I."/>
            <person name="Muhle H."/>
            <person name="Salzmann A."/>
            <person name="Chaouch M."/>
            <person name="Oubaiche M.L."/>
            <person name="Ziglio S."/>
            <person name="Gehrig C."/>
            <person name="Santoni F."/>
            <person name="Pizzato M."/>
            <person name="Langel U."/>
            <person name="Antonarakis S.E."/>
        </authorList>
    </citation>
    <scope>FUNCTION</scope>
</reference>
<reference key="10">
    <citation type="journal article" date="2015" name="Biochim. Biophys. Acta">
        <title>The zinc binding receptor GPR39 interacts with 5-HT1A and GalR1 to form dynamic heteroreceptor complexes with signaling diversity.</title>
        <authorList>
            <person name="Tena-Campos M."/>
            <person name="Ramon E."/>
            <person name="Borroto-Escuela D.O."/>
            <person name="Fuxe K."/>
            <person name="Garriga P."/>
        </authorList>
    </citation>
    <scope>SUBCELLULAR LOCATION</scope>
    <scope>INTERACTION WITH GRP39 AND HTR1A</scope>
</reference>
<dbReference type="EMBL" id="L34339">
    <property type="protein sequence ID" value="AAA50767.1"/>
    <property type="molecule type" value="mRNA"/>
</dbReference>
<dbReference type="EMBL" id="U53511">
    <property type="protein sequence ID" value="AAC51936.1"/>
    <property type="molecule type" value="mRNA"/>
</dbReference>
<dbReference type="EMBL" id="U90660">
    <property type="protein sequence ID" value="AAC95397.1"/>
    <property type="molecule type" value="Genomic_DNA"/>
</dbReference>
<dbReference type="EMBL" id="U90658">
    <property type="protein sequence ID" value="AAC95397.1"/>
    <property type="status" value="JOINED"/>
    <property type="molecule type" value="Genomic_DNA"/>
</dbReference>
<dbReference type="EMBL" id="U90659">
    <property type="protein sequence ID" value="AAC95397.1"/>
    <property type="status" value="JOINED"/>
    <property type="molecule type" value="Genomic_DNA"/>
</dbReference>
<dbReference type="EMBL" id="U23854">
    <property type="protein sequence ID" value="AAB60356.1"/>
    <property type="molecule type" value="mRNA"/>
</dbReference>
<dbReference type="EMBL" id="AY541036">
    <property type="protein sequence ID" value="AAS47032.1"/>
    <property type="molecule type" value="mRNA"/>
</dbReference>
<dbReference type="EMBL" id="AC100863">
    <property type="status" value="NOT_ANNOTATED_CDS"/>
    <property type="molecule type" value="Genomic_DNA"/>
</dbReference>
<dbReference type="EMBL" id="CH471117">
    <property type="protein sequence ID" value="EAW66603.1"/>
    <property type="molecule type" value="Genomic_DNA"/>
</dbReference>
<dbReference type="EMBL" id="BC095530">
    <property type="protein sequence ID" value="AAH95530.1"/>
    <property type="molecule type" value="mRNA"/>
</dbReference>
<dbReference type="CCDS" id="CCDS12012.1"/>
<dbReference type="PIR" id="I59336">
    <property type="entry name" value="I59336"/>
</dbReference>
<dbReference type="RefSeq" id="NP_001471.2">
    <property type="nucleotide sequence ID" value="NM_001480.4"/>
</dbReference>
<dbReference type="PDB" id="7WQ3">
    <property type="method" value="EM"/>
    <property type="resolution" value="2.70 A"/>
    <property type="chains" value="R=1-349"/>
</dbReference>
<dbReference type="PDB" id="7XJJ">
    <property type="method" value="EM"/>
    <property type="resolution" value="3.30 A"/>
    <property type="chains" value="E=1-322"/>
</dbReference>
<dbReference type="PDBsum" id="7WQ3"/>
<dbReference type="PDBsum" id="7XJJ"/>
<dbReference type="EMDB" id="EMD-32698"/>
<dbReference type="EMDB" id="EMD-33229"/>
<dbReference type="SMR" id="P47211"/>
<dbReference type="BioGRID" id="108859">
    <property type="interactions" value="3"/>
</dbReference>
<dbReference type="CORUM" id="P47211"/>
<dbReference type="FunCoup" id="P47211">
    <property type="interactions" value="961"/>
</dbReference>
<dbReference type="IntAct" id="P47211">
    <property type="interactions" value="6"/>
</dbReference>
<dbReference type="STRING" id="9606.ENSP00000299727"/>
<dbReference type="BindingDB" id="P47211"/>
<dbReference type="ChEMBL" id="CHEMBL4894"/>
<dbReference type="GuidetoPHARMACOLOGY" id="243"/>
<dbReference type="GlyCosmos" id="P47211">
    <property type="glycosylation" value="3 sites, No reported glycans"/>
</dbReference>
<dbReference type="GlyGen" id="P47211">
    <property type="glycosylation" value="3 sites"/>
</dbReference>
<dbReference type="iPTMnet" id="P47211"/>
<dbReference type="PhosphoSitePlus" id="P47211"/>
<dbReference type="BioMuta" id="GALR1"/>
<dbReference type="DMDM" id="311033447"/>
<dbReference type="PaxDb" id="9606-ENSP00000299727"/>
<dbReference type="PeptideAtlas" id="P47211"/>
<dbReference type="Antibodypedia" id="10410">
    <property type="antibodies" value="356 antibodies from 35 providers"/>
</dbReference>
<dbReference type="DNASU" id="2587"/>
<dbReference type="Ensembl" id="ENST00000299727.5">
    <property type="protein sequence ID" value="ENSP00000299727.3"/>
    <property type="gene ID" value="ENSG00000166573.6"/>
</dbReference>
<dbReference type="GeneID" id="2587"/>
<dbReference type="KEGG" id="hsa:2587"/>
<dbReference type="MANE-Select" id="ENST00000299727.5">
    <property type="protein sequence ID" value="ENSP00000299727.3"/>
    <property type="RefSeq nucleotide sequence ID" value="NM_001480.4"/>
    <property type="RefSeq protein sequence ID" value="NP_001471.2"/>
</dbReference>
<dbReference type="UCSC" id="uc002lms.5">
    <property type="organism name" value="human"/>
</dbReference>
<dbReference type="AGR" id="HGNC:4132"/>
<dbReference type="CTD" id="2587"/>
<dbReference type="DisGeNET" id="2587"/>
<dbReference type="GeneCards" id="GALR1"/>
<dbReference type="HGNC" id="HGNC:4132">
    <property type="gene designation" value="GALR1"/>
</dbReference>
<dbReference type="HPA" id="ENSG00000166573">
    <property type="expression patterns" value="Tissue enhanced (adrenal gland, pituitary gland)"/>
</dbReference>
<dbReference type="MIM" id="600377">
    <property type="type" value="gene"/>
</dbReference>
<dbReference type="neXtProt" id="NX_P47211"/>
<dbReference type="OpenTargets" id="ENSG00000166573"/>
<dbReference type="PharmGKB" id="PA28545"/>
<dbReference type="VEuPathDB" id="HostDB:ENSG00000166573"/>
<dbReference type="eggNOG" id="KOG3656">
    <property type="taxonomic scope" value="Eukaryota"/>
</dbReference>
<dbReference type="GeneTree" id="ENSGT01130000278263"/>
<dbReference type="HOGENOM" id="CLU_009579_6_4_1"/>
<dbReference type="InParanoid" id="P47211"/>
<dbReference type="OMA" id="CWEQWPD"/>
<dbReference type="OrthoDB" id="2132067at2759"/>
<dbReference type="PAN-GO" id="P47211">
    <property type="GO annotations" value="3 GO annotations based on evolutionary models"/>
</dbReference>
<dbReference type="PhylomeDB" id="P47211"/>
<dbReference type="TreeFam" id="TF315737"/>
<dbReference type="PathwayCommons" id="P47211"/>
<dbReference type="Reactome" id="R-HSA-375276">
    <property type="pathway name" value="Peptide ligand-binding receptors"/>
</dbReference>
<dbReference type="Reactome" id="R-HSA-418594">
    <property type="pathway name" value="G alpha (i) signalling events"/>
</dbReference>
<dbReference type="SignaLink" id="P47211"/>
<dbReference type="SIGNOR" id="P47211"/>
<dbReference type="BioGRID-ORCS" id="2587">
    <property type="hits" value="9 hits in 1147 CRISPR screens"/>
</dbReference>
<dbReference type="ChiTaRS" id="GALR1">
    <property type="organism name" value="human"/>
</dbReference>
<dbReference type="GeneWiki" id="Galanin_receptor_1"/>
<dbReference type="GenomeRNAi" id="2587"/>
<dbReference type="Pharos" id="P47211">
    <property type="development level" value="Tchem"/>
</dbReference>
<dbReference type="PRO" id="PR:P47211"/>
<dbReference type="Proteomes" id="UP000005640">
    <property type="component" value="Chromosome 18"/>
</dbReference>
<dbReference type="RNAct" id="P47211">
    <property type="molecule type" value="protein"/>
</dbReference>
<dbReference type="Bgee" id="ENSG00000166573">
    <property type="expression patterns" value="Expressed in pituitary gland and 82 other cell types or tissues"/>
</dbReference>
<dbReference type="GO" id="GO:0016020">
    <property type="term" value="C:membrane"/>
    <property type="evidence" value="ECO:0000304"/>
    <property type="project" value="ProtInc"/>
</dbReference>
<dbReference type="GO" id="GO:0005886">
    <property type="term" value="C:plasma membrane"/>
    <property type="evidence" value="ECO:0000314"/>
    <property type="project" value="HPA"/>
</dbReference>
<dbReference type="GO" id="GO:0008528">
    <property type="term" value="F:G protein-coupled peptide receptor activity"/>
    <property type="evidence" value="ECO:0000318"/>
    <property type="project" value="GO_Central"/>
</dbReference>
<dbReference type="GO" id="GO:0004966">
    <property type="term" value="F:galanin receptor activity"/>
    <property type="evidence" value="ECO:0000314"/>
    <property type="project" value="UniProtKB"/>
</dbReference>
<dbReference type="GO" id="GO:0042923">
    <property type="term" value="F:neuropeptide binding"/>
    <property type="evidence" value="ECO:0007669"/>
    <property type="project" value="Ensembl"/>
</dbReference>
<dbReference type="GO" id="GO:0017046">
    <property type="term" value="F:peptide hormone binding"/>
    <property type="evidence" value="ECO:0000314"/>
    <property type="project" value="UniProtKB"/>
</dbReference>
<dbReference type="GO" id="GO:0007189">
    <property type="term" value="P:adenylate cyclase-activating G protein-coupled receptor signaling pathway"/>
    <property type="evidence" value="ECO:0007669"/>
    <property type="project" value="Ensembl"/>
</dbReference>
<dbReference type="GO" id="GO:0007194">
    <property type="term" value="P:negative regulation of adenylate cyclase activity"/>
    <property type="evidence" value="ECO:0000304"/>
    <property type="project" value="ProtInc"/>
</dbReference>
<dbReference type="GO" id="GO:0007218">
    <property type="term" value="P:neuropeptide signaling pathway"/>
    <property type="evidence" value="ECO:0000318"/>
    <property type="project" value="GO_Central"/>
</dbReference>
<dbReference type="GO" id="GO:0051464">
    <property type="term" value="P:positive regulation of cortisol secretion"/>
    <property type="evidence" value="ECO:0000315"/>
    <property type="project" value="UniProtKB"/>
</dbReference>
<dbReference type="GO" id="GO:0007204">
    <property type="term" value="P:positive regulation of cytosolic calcium ion concentration"/>
    <property type="evidence" value="ECO:0007669"/>
    <property type="project" value="InterPro"/>
</dbReference>
<dbReference type="GO" id="GO:0045944">
    <property type="term" value="P:positive regulation of transcription by RNA polymerase II"/>
    <property type="evidence" value="ECO:0000314"/>
    <property type="project" value="UniProtKB"/>
</dbReference>
<dbReference type="CDD" id="cd15098">
    <property type="entry name" value="7tmA_Gal1_R"/>
    <property type="match status" value="1"/>
</dbReference>
<dbReference type="FunFam" id="1.20.1070.10:FF:000135">
    <property type="entry name" value="galanin receptor type 1"/>
    <property type="match status" value="1"/>
</dbReference>
<dbReference type="Gene3D" id="1.20.1070.10">
    <property type="entry name" value="Rhodopsin 7-helix transmembrane proteins"/>
    <property type="match status" value="1"/>
</dbReference>
<dbReference type="InterPro" id="IPR003906">
    <property type="entry name" value="GAL1_rcpt"/>
</dbReference>
<dbReference type="InterPro" id="IPR000405">
    <property type="entry name" value="Galanin_rcpt"/>
</dbReference>
<dbReference type="InterPro" id="IPR000276">
    <property type="entry name" value="GPCR_Rhodpsn"/>
</dbReference>
<dbReference type="InterPro" id="IPR017452">
    <property type="entry name" value="GPCR_Rhodpsn_7TM"/>
</dbReference>
<dbReference type="PANTHER" id="PTHR45695:SF25">
    <property type="entry name" value="GALANIN RECEPTOR 1"/>
    <property type="match status" value="1"/>
</dbReference>
<dbReference type="PANTHER" id="PTHR45695">
    <property type="entry name" value="LEUCOKININ RECEPTOR-RELATED"/>
    <property type="match status" value="1"/>
</dbReference>
<dbReference type="Pfam" id="PF00001">
    <property type="entry name" value="7tm_1"/>
    <property type="match status" value="1"/>
</dbReference>
<dbReference type="PRINTS" id="PR01418">
    <property type="entry name" value="GALANIN1R"/>
</dbReference>
<dbReference type="PRINTS" id="PR00663">
    <property type="entry name" value="GALANINR"/>
</dbReference>
<dbReference type="PRINTS" id="PR00237">
    <property type="entry name" value="GPCRRHODOPSN"/>
</dbReference>
<dbReference type="SMART" id="SM01381">
    <property type="entry name" value="7TM_GPCR_Srsx"/>
    <property type="match status" value="1"/>
</dbReference>
<dbReference type="SUPFAM" id="SSF81321">
    <property type="entry name" value="Family A G protein-coupled receptor-like"/>
    <property type="match status" value="1"/>
</dbReference>
<dbReference type="PROSITE" id="PS00237">
    <property type="entry name" value="G_PROTEIN_RECEP_F1_1"/>
    <property type="match status" value="1"/>
</dbReference>
<dbReference type="PROSITE" id="PS50262">
    <property type="entry name" value="G_PROTEIN_RECEP_F1_2"/>
    <property type="match status" value="1"/>
</dbReference>
<accession>P47211</accession>
<accession>Q4VBL7</accession>
<feature type="chain" id="PRO_0000069463" description="Galanin receptor type 1">
    <location>
        <begin position="1"/>
        <end position="349"/>
    </location>
</feature>
<feature type="topological domain" description="Extracellular" evidence="2">
    <location>
        <begin position="1"/>
        <end position="36"/>
    </location>
</feature>
<feature type="transmembrane region" description="Helical; Name=1" evidence="2">
    <location>
        <begin position="37"/>
        <end position="57"/>
    </location>
</feature>
<feature type="topological domain" description="Cytoplasmic" evidence="2">
    <location>
        <begin position="58"/>
        <end position="70"/>
    </location>
</feature>
<feature type="transmembrane region" description="Helical; Name=2" evidence="2">
    <location>
        <begin position="71"/>
        <end position="91"/>
    </location>
</feature>
<feature type="topological domain" description="Extracellular" evidence="2">
    <location>
        <begin position="92"/>
        <end position="109"/>
    </location>
</feature>
<feature type="transmembrane region" description="Helical; Name=3" evidence="2">
    <location>
        <begin position="110"/>
        <end position="131"/>
    </location>
</feature>
<feature type="topological domain" description="Cytoplasmic" evidence="2">
    <location>
        <begin position="132"/>
        <end position="151"/>
    </location>
</feature>
<feature type="transmembrane region" description="Helical; Name=4" evidence="2">
    <location>
        <begin position="152"/>
        <end position="172"/>
    </location>
</feature>
<feature type="topological domain" description="Extracellular" evidence="2">
    <location>
        <begin position="173"/>
        <end position="200"/>
    </location>
</feature>
<feature type="transmembrane region" description="Helical; Name=5" evidence="2">
    <location>
        <begin position="201"/>
        <end position="221"/>
    </location>
</feature>
<feature type="topological domain" description="Cytoplasmic" evidence="2">
    <location>
        <begin position="222"/>
        <end position="248"/>
    </location>
</feature>
<feature type="transmembrane region" description="Helical; Name=6" evidence="2">
    <location>
        <begin position="249"/>
        <end position="269"/>
    </location>
</feature>
<feature type="topological domain" description="Extracellular" evidence="2">
    <location>
        <begin position="270"/>
        <end position="271"/>
    </location>
</feature>
<feature type="transmembrane region" description="Helical; Name=7" evidence="2">
    <location>
        <begin position="272"/>
        <end position="292"/>
    </location>
</feature>
<feature type="topological domain" description="Cytoplasmic" evidence="2">
    <location>
        <begin position="293"/>
        <end position="349"/>
    </location>
</feature>
<feature type="lipid moiety-binding region" description="S-palmitoyl cysteine" evidence="1">
    <location>
        <position position="320"/>
    </location>
</feature>
<feature type="glycosylation site" description="N-linked (GlcNAc...) asparagine" evidence="2">
    <location>
        <position position="7"/>
    </location>
</feature>
<feature type="glycosylation site" description="N-linked (GlcNAc...) asparagine" evidence="2">
    <location>
        <position position="12"/>
    </location>
</feature>
<feature type="glycosylation site" description="N-linked (GlcNAc...) asparagine" evidence="2">
    <location>
        <position position="183"/>
    </location>
</feature>
<feature type="disulfide bond" evidence="3">
    <location>
        <begin position="108"/>
        <end position="187"/>
    </location>
</feature>
<feature type="sequence variant" id="VAR_003514" description="In dbSNP:rs1143093." evidence="7 9">
    <original>W</original>
    <variation>C</variation>
    <location>
        <position position="15"/>
    </location>
</feature>
<feature type="sequence variant" id="VAR_014682" description="In dbSNP:rs5376." evidence="4 7 8 9 10 11 12">
    <original>S</original>
    <variation>N</variation>
    <location>
        <position position="334"/>
    </location>
</feature>
<feature type="sequence variant" id="VAR_014683" description="In dbSNP:rs5377.">
    <original>P</original>
    <variation>L</variation>
    <location>
        <position position="342"/>
    </location>
</feature>
<feature type="helix" evidence="13">
    <location>
        <begin position="33"/>
        <end position="60"/>
    </location>
</feature>
<feature type="helix" evidence="13">
    <location>
        <begin position="69"/>
        <end position="97"/>
    </location>
</feature>
<feature type="strand" evidence="14">
    <location>
        <begin position="98"/>
        <end position="100"/>
    </location>
</feature>
<feature type="helix" evidence="13">
    <location>
        <begin position="104"/>
        <end position="138"/>
    </location>
</feature>
<feature type="turn" evidence="13">
    <location>
        <begin position="139"/>
        <end position="142"/>
    </location>
</feature>
<feature type="helix" evidence="13">
    <location>
        <begin position="143"/>
        <end position="146"/>
    </location>
</feature>
<feature type="helix" evidence="13">
    <location>
        <begin position="149"/>
        <end position="166"/>
    </location>
</feature>
<feature type="helix" evidence="13">
    <location>
        <begin position="168"/>
        <end position="173"/>
    </location>
</feature>
<feature type="strand" evidence="13">
    <location>
        <begin position="175"/>
        <end position="177"/>
    </location>
</feature>
<feature type="strand" evidence="13">
    <location>
        <begin position="186"/>
        <end position="188"/>
    </location>
</feature>
<feature type="helix" evidence="13">
    <location>
        <begin position="194"/>
        <end position="208"/>
    </location>
</feature>
<feature type="helix" evidence="13">
    <location>
        <begin position="210"/>
        <end position="230"/>
    </location>
</feature>
<feature type="helix" evidence="13">
    <location>
        <begin position="236"/>
        <end position="259"/>
    </location>
</feature>
<feature type="helix" evidence="13">
    <location>
        <begin position="261"/>
        <end position="271"/>
    </location>
</feature>
<feature type="helix" evidence="13">
    <location>
        <begin position="279"/>
        <end position="302"/>
    </location>
</feature>
<feature type="strand" evidence="13">
    <location>
        <begin position="303"/>
        <end position="307"/>
    </location>
</feature>
<feature type="helix" evidence="13">
    <location>
        <begin position="308"/>
        <end position="317"/>
    </location>
</feature>
<proteinExistence type="evidence at protein level"/>
<gene>
    <name type="primary">GALR1</name>
    <name type="synonym">GALNR</name>
    <name type="synonym">GALNR1</name>
</gene>
<protein>
    <recommendedName>
        <fullName>Galanin receptor type 1</fullName>
        <shortName>GAL1-R</shortName>
        <shortName>GALR-1</shortName>
    </recommendedName>
</protein>
<comment type="function">
    <text evidence="5 7">Receptor for the hormone galanin. The activity of this receptor is mediated by G proteins that inhibit adenylate cyclase activity.</text>
</comment>
<comment type="subunit">
    <text evidence="6">Interacts with GRP39 AND HTR1A.</text>
</comment>
<comment type="interaction">
    <interactant intactId="EBI-6624741">
        <id>P47211</id>
    </interactant>
    <interactant intactId="EBI-6624800">
        <id>PRO_0000010449</id>
        <label>GAL</label>
        <dbReference type="UniProtKB" id="P22466"/>
    </interactant>
    <organismsDiffer>false</organismsDiffer>
    <experiments>2</experiments>
</comment>
<comment type="interaction">
    <interactant intactId="EBI-6624741">
        <id>P47211</id>
    </interactant>
    <interactant intactId="EBI-12004298">
        <id>O75971-2</id>
        <label>SNAPC5</label>
    </interactant>
    <organismsDiffer>false</organismsDiffer>
    <experiments>3</experiments>
</comment>
<comment type="subcellular location">
    <subcellularLocation>
        <location evidence="6">Cell membrane</location>
        <topology>Multi-pass membrane protein</topology>
    </subcellularLocation>
</comment>
<comment type="PTM">
    <text>Palmitoylated on at least one of the three cysteine residues present in the C-terminal part.</text>
</comment>
<comment type="similarity">
    <text evidence="3">Belongs to the G-protein coupled receptor 1 family.</text>
</comment>
<keyword id="KW-0002">3D-structure</keyword>
<keyword id="KW-1003">Cell membrane</keyword>
<keyword id="KW-1015">Disulfide bond</keyword>
<keyword id="KW-0297">G-protein coupled receptor</keyword>
<keyword id="KW-0325">Glycoprotein</keyword>
<keyword id="KW-0449">Lipoprotein</keyword>
<keyword id="KW-0472">Membrane</keyword>
<keyword id="KW-0564">Palmitate</keyword>
<keyword id="KW-0675">Receptor</keyword>
<keyword id="KW-1185">Reference proteome</keyword>
<keyword id="KW-0807">Transducer</keyword>
<keyword id="KW-0812">Transmembrane</keyword>
<keyword id="KW-1133">Transmembrane helix</keyword>
<organism>
    <name type="scientific">Homo sapiens</name>
    <name type="common">Human</name>
    <dbReference type="NCBI Taxonomy" id="9606"/>
    <lineage>
        <taxon>Eukaryota</taxon>
        <taxon>Metazoa</taxon>
        <taxon>Chordata</taxon>
        <taxon>Craniata</taxon>
        <taxon>Vertebrata</taxon>
        <taxon>Euteleostomi</taxon>
        <taxon>Mammalia</taxon>
        <taxon>Eutheria</taxon>
        <taxon>Euarchontoglires</taxon>
        <taxon>Primates</taxon>
        <taxon>Haplorrhini</taxon>
        <taxon>Catarrhini</taxon>
        <taxon>Hominidae</taxon>
        <taxon>Homo</taxon>
    </lineage>
</organism>
<sequence>MELAVGNLSEGNASWPEPPAPEPGPLFGIGVENFVTLVVFGLIFALGVLGNSLVITVLARSKPGKPRSTTNLFILNLSIADLAYLLFCIPFQATVYALPTWVLGAFICKFIHYFFTVSMLVSIFTLAAMSVDRYVAIVHSRRSSSLRVSRNALLGVGCIWALSIAMASPVAYHQGLFHPRASNQTFCWEQWPDPRHKKAYVVCTFVFGYLLPLLLICFCYAKVLNHLHKKLKNMSKKSEASKKKTAQTVLVVVVVFGISWLPHHIIHLWAEFGVFPLTPASFLFRITAHCLAYSNSSVNPIIYAFLSENFRKAYKQVFKCHIRKDSHLSDTKESKSRIDTPPSTNCTHV</sequence>
<name>GALR1_HUMAN</name>